<keyword id="KW-0255">Endonuclease</keyword>
<keyword id="KW-0378">Hydrolase</keyword>
<keyword id="KW-0540">Nuclease</keyword>
<keyword id="KW-0680">Restriction system</keyword>
<reference key="1">
    <citation type="journal article" date="1991" name="Nucleic Acids Res.">
        <title>Stepwise cloning and molecular characterization of the HgiDI restriction-modification system from Herpetosiphon giganteus Hpa2.</title>
        <authorList>
            <person name="Duesterhoeft A."/>
            <person name="Erdmann D."/>
            <person name="Kroeger M."/>
        </authorList>
    </citation>
    <scope>NUCLEOTIDE SEQUENCE [GENOMIC DNA]</scope>
    <scope>FUNCTION</scope>
    <source>
        <strain>HPA2</strain>
    </source>
</reference>
<reference key="2">
    <citation type="journal article" date="1995" name="Gene">
        <title>Organization and gene expression within restriction-modification systems of Herpetosiphon giganteus.</title>
        <authorList>
            <person name="Kroeger M."/>
            <person name="Blum E."/>
            <person name="Deppe E."/>
            <person name="Duesterhoeft A."/>
            <person name="Erdmann D."/>
            <person name="Kilz S."/>
            <person name="Meyer-Rogge S."/>
            <person name="Moestl D."/>
        </authorList>
    </citation>
    <scope>DISCUSSION OF SEQUENCE</scope>
</reference>
<reference key="3">
    <citation type="journal article" date="2003" name="Nucleic Acids Res.">
        <title>A nomenclature for restriction enzymes, DNA methyltransferases, homing endonucleases and their genes.</title>
        <authorList>
            <person name="Roberts R.J."/>
            <person name="Belfort M."/>
            <person name="Bestor T."/>
            <person name="Bhagwat A.S."/>
            <person name="Bickle T.A."/>
            <person name="Bitinaite J."/>
            <person name="Blumenthal R.M."/>
            <person name="Degtyarev S.K."/>
            <person name="Dryden D.T."/>
            <person name="Dybvig K."/>
            <person name="Firman K."/>
            <person name="Gromova E.S."/>
            <person name="Gumport R.I."/>
            <person name="Halford S.E."/>
            <person name="Hattman S."/>
            <person name="Heitman J."/>
            <person name="Hornby D.P."/>
            <person name="Janulaitis A."/>
            <person name="Jeltsch A."/>
            <person name="Josephsen J."/>
            <person name="Kiss A."/>
            <person name="Klaenhammer T.R."/>
            <person name="Kobayashi I."/>
            <person name="Kong H."/>
            <person name="Krueger D.H."/>
            <person name="Lacks S."/>
            <person name="Marinus M.G."/>
            <person name="Miyahara M."/>
            <person name="Morgan R.D."/>
            <person name="Murray N.E."/>
            <person name="Nagaraja V."/>
            <person name="Piekarowicz A."/>
            <person name="Pingoud A."/>
            <person name="Raleigh E."/>
            <person name="Rao D.N."/>
            <person name="Reich N."/>
            <person name="Repin V.E."/>
            <person name="Selker E.U."/>
            <person name="Shaw P.C."/>
            <person name="Stein D.C."/>
            <person name="Stoddard B.L."/>
            <person name="Szybalski W."/>
            <person name="Trautner T.A."/>
            <person name="Van Etten J.L."/>
            <person name="Vitor J.M."/>
            <person name="Wilson G.G."/>
            <person name="Xu S.Y."/>
        </authorList>
    </citation>
    <scope>NOMENCLATURE</scope>
    <scope>SUBTYPE</scope>
</reference>
<evidence type="ECO:0000303" key="1">
    <source>
    </source>
</evidence>
<evidence type="ECO:0000303" key="2">
    <source>
    </source>
</evidence>
<evidence type="ECO:0000305" key="3">
    <source>
    </source>
</evidence>
<dbReference type="EC" id="3.1.21.4"/>
<dbReference type="EMBL" id="X55140">
    <property type="protein sequence ID" value="CAA38937.1"/>
    <property type="molecule type" value="Genomic_DNA"/>
</dbReference>
<dbReference type="PIR" id="S14028">
    <property type="entry name" value="S14028"/>
</dbReference>
<dbReference type="REBASE" id="1102">
    <property type="entry name" value="HgiDI"/>
</dbReference>
<dbReference type="PRO" id="PR:P24599"/>
<dbReference type="GO" id="GO:0003677">
    <property type="term" value="F:DNA binding"/>
    <property type="evidence" value="ECO:0007669"/>
    <property type="project" value="InterPro"/>
</dbReference>
<dbReference type="GO" id="GO:0009036">
    <property type="term" value="F:type II site-specific deoxyribonuclease activity"/>
    <property type="evidence" value="ECO:0007669"/>
    <property type="project" value="UniProtKB-EC"/>
</dbReference>
<dbReference type="GO" id="GO:0009307">
    <property type="term" value="P:DNA restriction-modification system"/>
    <property type="evidence" value="ECO:0007669"/>
    <property type="project" value="UniProtKB-KW"/>
</dbReference>
<dbReference type="InterPro" id="IPR019044">
    <property type="entry name" value="Restrct_endonuc_II_HindVP"/>
</dbReference>
<dbReference type="Pfam" id="PF09519">
    <property type="entry name" value="RE_HindVP"/>
    <property type="match status" value="1"/>
</dbReference>
<accession>P24599</accession>
<gene>
    <name evidence="2" type="primary">hgiDIR</name>
</gene>
<comment type="function">
    <text evidence="1 3">A P subtype restriction enzyme that recognizes the double-stranded sequence 5'-GRCGYC-3' and cleaves after R-2.</text>
</comment>
<comment type="catalytic activity">
    <reaction>
        <text>Endonucleolytic cleavage of DNA to give specific double-stranded fragments with terminal 5'-phosphates.</text>
        <dbReference type="EC" id="3.1.21.4"/>
    </reaction>
</comment>
<proteinExistence type="predicted"/>
<name>T2D1_HERAU</name>
<sequence>MFEQLNQPGLFGITNSNRDFTKKEAWGKNQFNNAFPIALACFMFSQNIKPIYIRLEKRNIEHNYFAVDQVFQINPLEAQAFFAFEHSYHPYTELIIGKTPAIDVVISNLQNSQIINAFEIKLTAIPDNTTANLPDNLQGCEIVIRPDTIVYLALSIAKVFQQNPLALLDILDPVCARIGDWEDATSIQPMIPLFCELLYTIFDRYQAVQIPILLQPIWKTQGKLSILHENCLDLFVWSNFALAKVFLDASIKPSEKSITRPERTTVWLIKMLYDFAQNGKIDYKRTLDRITFNLKNDKAFAASGMVTRKYMNSPELQNPRIKRHSIKHIIINGGQRYLSPERRLDSAIVSTPGLFEEIL</sequence>
<feature type="chain" id="PRO_0000077313" description="Type II restriction enzyme HgiDI">
    <location>
        <begin position="1"/>
        <end position="359"/>
    </location>
</feature>
<organism>
    <name type="scientific">Herpetosiphon aurantiacus</name>
    <name type="common">Herpetosiphon giganteus</name>
    <dbReference type="NCBI Taxonomy" id="65"/>
    <lineage>
        <taxon>Bacteria</taxon>
        <taxon>Bacillati</taxon>
        <taxon>Chloroflexota</taxon>
        <taxon>Chloroflexia</taxon>
        <taxon>Herpetosiphonales</taxon>
        <taxon>Herpetosiphonaceae</taxon>
        <taxon>Herpetosiphon</taxon>
    </lineage>
</organism>
<protein>
    <recommendedName>
        <fullName evidence="1">Type II restriction enzyme HgiDI</fullName>
        <shortName evidence="2">R.HgiDI</shortName>
        <ecNumber>3.1.21.4</ecNumber>
    </recommendedName>
    <alternativeName>
        <fullName>Endonuclease HgiDI</fullName>
    </alternativeName>
    <alternativeName>
        <fullName>Type-2 restriction enzyme HgiDI</fullName>
    </alternativeName>
</protein>